<gene>
    <name type="primary">ycf39</name>
</gene>
<sequence length="321" mass="36437">MSILVIGATGTLGRQIVRSALDEGYQVRCLVRNLRKAAFLKEWGAKLIWGDLSQPESLLPALTGIRVIIDTSTSRPTDPAGVYQVDLKGKKALIDAAKAMKIEKFIFFSILNSEKYSQVPLMRIKTVTEELLKESGLNYTIFKLCGFFQGLIGQYAVPILDQQTVWITTESTSIAYMDTIDIARFTLRSLVLKETNNRVFPLVGTRSWNSADIIQLCERLSGQNAKVTRVPIAFLELARNTSCFFEWGWNIADRLAFTEVLSKSQFFNSSMDEVYKIFKIESTSTTILESYLQEYFSRILKRLKEINSQQSQKKKTSDLFV</sequence>
<feature type="chain" id="PRO_0000204554" description="Photosystem II assembly factor Ycf39">
    <location>
        <begin position="1"/>
        <end position="321"/>
    </location>
</feature>
<proteinExistence type="inferred from homology"/>
<keyword id="KW-0194">Cyanelle</keyword>
<keyword id="KW-0560">Oxidoreductase</keyword>
<keyword id="KW-0602">Photosynthesis</keyword>
<keyword id="KW-0604">Photosystem II</keyword>
<keyword id="KW-0934">Plastid</keyword>
<geneLocation type="cyanelle"/>
<protein>
    <recommendedName>
        <fullName evidence="2">Photosystem II assembly factor Ycf39</fullName>
        <ecNumber>1.-.-.-</ecNumber>
    </recommendedName>
</protein>
<reference key="1">
    <citation type="journal article" date="1995" name="Plant Mol. Biol. Rep.">
        <title>Nucleotide sequence of the cyanelle DNA from Cyanophora paradoxa.</title>
        <authorList>
            <person name="Stirewalt V.L."/>
            <person name="Michalowski C.B."/>
            <person name="Loeffelhardt W."/>
            <person name="Bohnert H.J."/>
            <person name="Bryant D.A."/>
        </authorList>
    </citation>
    <scope>NUCLEOTIDE SEQUENCE [LARGE SCALE GENOMIC DNA]</scope>
    <source>
        <strain>UTEX LB 555 / Pringsheim</strain>
    </source>
</reference>
<reference key="2">
    <citation type="book" date="1997" name="Eukaryotism and symbiosis">
        <title>The complete sequence of the cyanelle genome of Cyanophora paradoxa: the genetic complexity of a primitive plastid.</title>
        <editorList>
            <person name="Schenk H.E.A."/>
            <person name="Herrmann R."/>
            <person name="Jeon K.W."/>
            <person name="Mueller N.E."/>
            <person name="Schwemmler W."/>
        </editorList>
        <authorList>
            <person name="Loeffelhardt W."/>
            <person name="Stirewalt V.L."/>
            <person name="Michalowski C.B."/>
            <person name="Annarella M."/>
            <person name="Farley J.Y."/>
            <person name="Schluchter W.M."/>
            <person name="Chung S."/>
            <person name="Newmann-Spallart C."/>
            <person name="Steiner J.M."/>
            <person name="Jakowitsch J."/>
            <person name="Bohnert H.J."/>
            <person name="Bryant D.A."/>
        </authorList>
    </citation>
    <scope>NUCLEOTIDE SEQUENCE [LARGE SCALE GENOMIC DNA]</scope>
    <source>
        <strain>UTEX LB 555 / Pringsheim</strain>
    </source>
</reference>
<accession>P48279</accession>
<evidence type="ECO:0000250" key="1">
    <source>
        <dbReference type="UniProtKB" id="P74429"/>
    </source>
</evidence>
<evidence type="ECO:0000305" key="2"/>
<name>YCF39_CYAPA</name>
<dbReference type="EC" id="1.-.-.-"/>
<dbReference type="EMBL" id="U30821">
    <property type="protein sequence ID" value="AAA81188.1"/>
    <property type="molecule type" value="Genomic_DNA"/>
</dbReference>
<dbReference type="PIR" id="T06845">
    <property type="entry name" value="T06845"/>
</dbReference>
<dbReference type="RefSeq" id="NP_043157.1">
    <property type="nucleotide sequence ID" value="NC_001675.1"/>
</dbReference>
<dbReference type="SMR" id="P48279"/>
<dbReference type="GeneID" id="801507"/>
<dbReference type="GO" id="GO:0009842">
    <property type="term" value="C:cyanelle"/>
    <property type="evidence" value="ECO:0007669"/>
    <property type="project" value="UniProtKB-SubCell"/>
</dbReference>
<dbReference type="GO" id="GO:0009523">
    <property type="term" value="C:photosystem II"/>
    <property type="evidence" value="ECO:0007669"/>
    <property type="project" value="UniProtKB-KW"/>
</dbReference>
<dbReference type="GO" id="GO:0016491">
    <property type="term" value="F:oxidoreductase activity"/>
    <property type="evidence" value="ECO:0007669"/>
    <property type="project" value="UniProtKB-KW"/>
</dbReference>
<dbReference type="GO" id="GO:0015979">
    <property type="term" value="P:photosynthesis"/>
    <property type="evidence" value="ECO:0007669"/>
    <property type="project" value="UniProtKB-KW"/>
</dbReference>
<dbReference type="CDD" id="cd05243">
    <property type="entry name" value="SDR_a5"/>
    <property type="match status" value="1"/>
</dbReference>
<dbReference type="Gene3D" id="3.40.50.720">
    <property type="entry name" value="NAD(P)-binding Rossmann-like Domain"/>
    <property type="match status" value="1"/>
</dbReference>
<dbReference type="InterPro" id="IPR044256">
    <property type="entry name" value="HCF244-like"/>
</dbReference>
<dbReference type="InterPro" id="IPR036291">
    <property type="entry name" value="NAD(P)-bd_dom_sf"/>
</dbReference>
<dbReference type="InterPro" id="IPR008030">
    <property type="entry name" value="NmrA-like"/>
</dbReference>
<dbReference type="PANTHER" id="PTHR47128">
    <property type="match status" value="1"/>
</dbReference>
<dbReference type="PANTHER" id="PTHR47128:SF2">
    <property type="entry name" value="PROTEIN HIGH CHLOROPHYLL FLUORESCENCE PHENOTYPE 244, CHLOROPLASTIC"/>
    <property type="match status" value="1"/>
</dbReference>
<dbReference type="Pfam" id="PF05368">
    <property type="entry name" value="NmrA"/>
    <property type="match status" value="1"/>
</dbReference>
<dbReference type="SUPFAM" id="SSF51735">
    <property type="entry name" value="NAD(P)-binding Rossmann-fold domains"/>
    <property type="match status" value="1"/>
</dbReference>
<comment type="function">
    <text evidence="1">Involved in assembly of photosystem II.</text>
</comment>
<comment type="subcellular location">
    <subcellularLocation>
        <location>Plastid</location>
        <location>Cyanelle</location>
    </subcellularLocation>
</comment>
<comment type="similarity">
    <text evidence="2">Belongs to the NmrA-type oxidoreductase family. Ycf39 subfamily.</text>
</comment>
<organism>
    <name type="scientific">Cyanophora paradoxa</name>
    <dbReference type="NCBI Taxonomy" id="2762"/>
    <lineage>
        <taxon>Eukaryota</taxon>
        <taxon>Glaucocystophyceae</taxon>
        <taxon>Cyanophoraceae</taxon>
        <taxon>Cyanophora</taxon>
    </lineage>
</organism>